<dbReference type="EMBL" id="AC006085">
    <property type="protein sequence ID" value="AAD30643.1"/>
    <property type="molecule type" value="Genomic_DNA"/>
</dbReference>
<dbReference type="EMBL" id="CP002684">
    <property type="protein sequence ID" value="AEE32650.1"/>
    <property type="molecule type" value="Genomic_DNA"/>
</dbReference>
<dbReference type="PIR" id="B96551">
    <property type="entry name" value="B96551"/>
</dbReference>
<dbReference type="RefSeq" id="NP_564587.1">
    <property type="nucleotide sequence ID" value="NM_104010.1"/>
</dbReference>
<dbReference type="SMR" id="Q9SYD4"/>
<dbReference type="BioGRID" id="26780">
    <property type="interactions" value="1"/>
</dbReference>
<dbReference type="STRING" id="3702.Q9SYD4"/>
<dbReference type="PaxDb" id="3702-AT1G51320.1"/>
<dbReference type="EnsemblPlants" id="AT1G51320.1">
    <property type="protein sequence ID" value="AT1G51320.1"/>
    <property type="gene ID" value="AT1G51320"/>
</dbReference>
<dbReference type="GeneID" id="841555"/>
<dbReference type="Gramene" id="AT1G51320.1">
    <property type="protein sequence ID" value="AT1G51320.1"/>
    <property type="gene ID" value="AT1G51320"/>
</dbReference>
<dbReference type="KEGG" id="ath:AT1G51320"/>
<dbReference type="Araport" id="AT1G51320"/>
<dbReference type="TAIR" id="AT1G51320"/>
<dbReference type="HOGENOM" id="CLU_034692_2_1_1"/>
<dbReference type="InParanoid" id="Q9SYD4"/>
<dbReference type="OMA" id="DSTWSIF"/>
<dbReference type="PhylomeDB" id="Q9SYD4"/>
<dbReference type="PRO" id="PR:Q9SYD4"/>
<dbReference type="Proteomes" id="UP000006548">
    <property type="component" value="Chromosome 1"/>
</dbReference>
<dbReference type="ExpressionAtlas" id="Q9SYD4">
    <property type="expression patterns" value="baseline"/>
</dbReference>
<dbReference type="GO" id="GO:0009507">
    <property type="term" value="C:chloroplast"/>
    <property type="evidence" value="ECO:0007005"/>
    <property type="project" value="TAIR"/>
</dbReference>
<dbReference type="CDD" id="cd22157">
    <property type="entry name" value="F-box_AtFBW1-like"/>
    <property type="match status" value="1"/>
</dbReference>
<dbReference type="Gene3D" id="1.20.1280.50">
    <property type="match status" value="1"/>
</dbReference>
<dbReference type="InterPro" id="IPR050233">
    <property type="entry name" value="A_thaliana_F-box"/>
</dbReference>
<dbReference type="InterPro" id="IPR006527">
    <property type="entry name" value="F-box-assoc_dom_typ1"/>
</dbReference>
<dbReference type="InterPro" id="IPR017451">
    <property type="entry name" value="F-box-assoc_interact_dom"/>
</dbReference>
<dbReference type="InterPro" id="IPR036047">
    <property type="entry name" value="F-box-like_dom_sf"/>
</dbReference>
<dbReference type="InterPro" id="IPR001810">
    <property type="entry name" value="F-box_dom"/>
</dbReference>
<dbReference type="NCBIfam" id="TIGR01640">
    <property type="entry name" value="F_box_assoc_1"/>
    <property type="match status" value="1"/>
</dbReference>
<dbReference type="PANTHER" id="PTHR47993:SF181">
    <property type="entry name" value="F-BOX ONLY PROTEIN 10-RELATED"/>
    <property type="match status" value="1"/>
</dbReference>
<dbReference type="PANTHER" id="PTHR47993">
    <property type="entry name" value="OS09G0372900 PROTEIN-RELATED"/>
    <property type="match status" value="1"/>
</dbReference>
<dbReference type="Pfam" id="PF00646">
    <property type="entry name" value="F-box"/>
    <property type="match status" value="1"/>
</dbReference>
<dbReference type="Pfam" id="PF07734">
    <property type="entry name" value="FBA_1"/>
    <property type="match status" value="1"/>
</dbReference>
<dbReference type="SMART" id="SM00256">
    <property type="entry name" value="FBOX"/>
    <property type="match status" value="1"/>
</dbReference>
<dbReference type="SUPFAM" id="SSF81383">
    <property type="entry name" value="F-box domain"/>
    <property type="match status" value="1"/>
</dbReference>
<dbReference type="PROSITE" id="PS50181">
    <property type="entry name" value="FBOX"/>
    <property type="match status" value="1"/>
</dbReference>
<name>FBX11_ARATH</name>
<sequence length="375" mass="44208">MVSVNLPWELVEEILCRVPPQSLVKFRTVCKQWNSLFDDNKFVNDHFVQSQPQLIFRTESKIYSVAVNFKGPRIEVHELPLAIPGLKSEMPIRLHDYVDCDGLLFCTSYFNGVLIWNPWLRQTRFFPSIHRYPVTYDIGYDNKKQYKMLDYYKCEGDSSIKSIIYEIGLYSKKVKDLESDSTWSIFQSNSVSLNGTLYWAGVDVNNGIFIRSFSFSTEKPRTFCSLPFMYDDDNVLALAVFRKDRLSLLNLCNKTSEIKIWLTKNNINDREVGLEEDVVWINLMTVLIPNFPKFSFYWYNRPDLTYFLDNDDAKRLVICCYDETDQAYIYIVKGDMFKKIKIDQYEVLSDYSRPHFHTYIPSLVRPSRVKEDNKN</sequence>
<evidence type="ECO:0000255" key="1">
    <source>
        <dbReference type="PROSITE-ProRule" id="PRU00080"/>
    </source>
</evidence>
<proteinExistence type="predicted"/>
<keyword id="KW-1185">Reference proteome</keyword>
<reference key="1">
    <citation type="journal article" date="2000" name="Nature">
        <title>Sequence and analysis of chromosome 1 of the plant Arabidopsis thaliana.</title>
        <authorList>
            <person name="Theologis A."/>
            <person name="Ecker J.R."/>
            <person name="Palm C.J."/>
            <person name="Federspiel N.A."/>
            <person name="Kaul S."/>
            <person name="White O."/>
            <person name="Alonso J."/>
            <person name="Altafi H."/>
            <person name="Araujo R."/>
            <person name="Bowman C.L."/>
            <person name="Brooks S.Y."/>
            <person name="Buehler E."/>
            <person name="Chan A."/>
            <person name="Chao Q."/>
            <person name="Chen H."/>
            <person name="Cheuk R.F."/>
            <person name="Chin C.W."/>
            <person name="Chung M.K."/>
            <person name="Conn L."/>
            <person name="Conway A.B."/>
            <person name="Conway A.R."/>
            <person name="Creasy T.H."/>
            <person name="Dewar K."/>
            <person name="Dunn P."/>
            <person name="Etgu P."/>
            <person name="Feldblyum T.V."/>
            <person name="Feng J.-D."/>
            <person name="Fong B."/>
            <person name="Fujii C.Y."/>
            <person name="Gill J.E."/>
            <person name="Goldsmith A.D."/>
            <person name="Haas B."/>
            <person name="Hansen N.F."/>
            <person name="Hughes B."/>
            <person name="Huizar L."/>
            <person name="Hunter J.L."/>
            <person name="Jenkins J."/>
            <person name="Johnson-Hopson C."/>
            <person name="Khan S."/>
            <person name="Khaykin E."/>
            <person name="Kim C.J."/>
            <person name="Koo H.L."/>
            <person name="Kremenetskaia I."/>
            <person name="Kurtz D.B."/>
            <person name="Kwan A."/>
            <person name="Lam B."/>
            <person name="Langin-Hooper S."/>
            <person name="Lee A."/>
            <person name="Lee J.M."/>
            <person name="Lenz C.A."/>
            <person name="Li J.H."/>
            <person name="Li Y.-P."/>
            <person name="Lin X."/>
            <person name="Liu S.X."/>
            <person name="Liu Z.A."/>
            <person name="Luros J.S."/>
            <person name="Maiti R."/>
            <person name="Marziali A."/>
            <person name="Militscher J."/>
            <person name="Miranda M."/>
            <person name="Nguyen M."/>
            <person name="Nierman W.C."/>
            <person name="Osborne B.I."/>
            <person name="Pai G."/>
            <person name="Peterson J."/>
            <person name="Pham P.K."/>
            <person name="Rizzo M."/>
            <person name="Rooney T."/>
            <person name="Rowley D."/>
            <person name="Sakano H."/>
            <person name="Salzberg S.L."/>
            <person name="Schwartz J.R."/>
            <person name="Shinn P."/>
            <person name="Southwick A.M."/>
            <person name="Sun H."/>
            <person name="Tallon L.J."/>
            <person name="Tambunga G."/>
            <person name="Toriumi M.J."/>
            <person name="Town C.D."/>
            <person name="Utterback T."/>
            <person name="Van Aken S."/>
            <person name="Vaysberg M."/>
            <person name="Vysotskaia V.S."/>
            <person name="Walker M."/>
            <person name="Wu D."/>
            <person name="Yu G."/>
            <person name="Fraser C.M."/>
            <person name="Venter J.C."/>
            <person name="Davis R.W."/>
        </authorList>
    </citation>
    <scope>NUCLEOTIDE SEQUENCE [LARGE SCALE GENOMIC DNA]</scope>
    <source>
        <strain>cv. Columbia</strain>
    </source>
</reference>
<reference key="2">
    <citation type="journal article" date="2017" name="Plant J.">
        <title>Araport11: a complete reannotation of the Arabidopsis thaliana reference genome.</title>
        <authorList>
            <person name="Cheng C.Y."/>
            <person name="Krishnakumar V."/>
            <person name="Chan A.P."/>
            <person name="Thibaud-Nissen F."/>
            <person name="Schobel S."/>
            <person name="Town C.D."/>
        </authorList>
    </citation>
    <scope>GENOME REANNOTATION</scope>
    <source>
        <strain>cv. Columbia</strain>
    </source>
</reference>
<reference key="3">
    <citation type="journal article" date="2000" name="Trends Plant Sci.">
        <title>F-box proteins in Arabidopsis.</title>
        <authorList>
            <person name="Xiao W."/>
            <person name="Jang J.-C."/>
        </authorList>
    </citation>
    <scope>GENE FAMILY</scope>
    <scope>NOMENCLATURE</scope>
</reference>
<organism>
    <name type="scientific">Arabidopsis thaliana</name>
    <name type="common">Mouse-ear cress</name>
    <dbReference type="NCBI Taxonomy" id="3702"/>
    <lineage>
        <taxon>Eukaryota</taxon>
        <taxon>Viridiplantae</taxon>
        <taxon>Streptophyta</taxon>
        <taxon>Embryophyta</taxon>
        <taxon>Tracheophyta</taxon>
        <taxon>Spermatophyta</taxon>
        <taxon>Magnoliopsida</taxon>
        <taxon>eudicotyledons</taxon>
        <taxon>Gunneridae</taxon>
        <taxon>Pentapetalae</taxon>
        <taxon>rosids</taxon>
        <taxon>malvids</taxon>
        <taxon>Brassicales</taxon>
        <taxon>Brassicaceae</taxon>
        <taxon>Camelineae</taxon>
        <taxon>Arabidopsis</taxon>
    </lineage>
</organism>
<gene>
    <name type="primary">FBX11</name>
    <name type="ordered locus">At1g51320</name>
    <name type="ORF">F11M15.18</name>
</gene>
<accession>Q9SYD4</accession>
<feature type="chain" id="PRO_0000273544" description="Putative F-box only protein 11">
    <location>
        <begin position="1"/>
        <end position="375"/>
    </location>
</feature>
<feature type="domain" description="F-box" evidence="1">
    <location>
        <begin position="1"/>
        <end position="46"/>
    </location>
</feature>
<protein>
    <recommendedName>
        <fullName>Putative F-box only protein 11</fullName>
    </recommendedName>
</protein>